<reference key="1">
    <citation type="journal article" date="2005" name="Nucleic Acids Res.">
        <title>Genome dynamics and diversity of Shigella species, the etiologic agents of bacillary dysentery.</title>
        <authorList>
            <person name="Yang F."/>
            <person name="Yang J."/>
            <person name="Zhang X."/>
            <person name="Chen L."/>
            <person name="Jiang Y."/>
            <person name="Yan Y."/>
            <person name="Tang X."/>
            <person name="Wang J."/>
            <person name="Xiong Z."/>
            <person name="Dong J."/>
            <person name="Xue Y."/>
            <person name="Zhu Y."/>
            <person name="Xu X."/>
            <person name="Sun L."/>
            <person name="Chen S."/>
            <person name="Nie H."/>
            <person name="Peng J."/>
            <person name="Xu J."/>
            <person name="Wang Y."/>
            <person name="Yuan Z."/>
            <person name="Wen Y."/>
            <person name="Yao Z."/>
            <person name="Shen Y."/>
            <person name="Qiang B."/>
            <person name="Hou Y."/>
            <person name="Yu J."/>
            <person name="Jin Q."/>
        </authorList>
    </citation>
    <scope>NUCLEOTIDE SEQUENCE [LARGE SCALE GENOMIC DNA]</scope>
    <source>
        <strain>Ss046</strain>
    </source>
</reference>
<accession>Q3YX65</accession>
<name>GLMM_SHISS</name>
<gene>
    <name evidence="1" type="primary">glmM</name>
    <name type="ordered locus">SSON_3324</name>
</gene>
<dbReference type="EC" id="5.4.2.10" evidence="1"/>
<dbReference type="EMBL" id="CP000038">
    <property type="protein sequence ID" value="AAZ89897.1"/>
    <property type="molecule type" value="Genomic_DNA"/>
</dbReference>
<dbReference type="RefSeq" id="WP_000071137.1">
    <property type="nucleotide sequence ID" value="NC_007384.1"/>
</dbReference>
<dbReference type="SMR" id="Q3YX65"/>
<dbReference type="GeneID" id="93778805"/>
<dbReference type="KEGG" id="ssn:SSON_3324"/>
<dbReference type="HOGENOM" id="CLU_016950_7_0_6"/>
<dbReference type="Proteomes" id="UP000002529">
    <property type="component" value="Chromosome"/>
</dbReference>
<dbReference type="GO" id="GO:0005829">
    <property type="term" value="C:cytosol"/>
    <property type="evidence" value="ECO:0007669"/>
    <property type="project" value="TreeGrafter"/>
</dbReference>
<dbReference type="GO" id="GO:0000287">
    <property type="term" value="F:magnesium ion binding"/>
    <property type="evidence" value="ECO:0007669"/>
    <property type="project" value="UniProtKB-UniRule"/>
</dbReference>
<dbReference type="GO" id="GO:0008966">
    <property type="term" value="F:phosphoglucosamine mutase activity"/>
    <property type="evidence" value="ECO:0007669"/>
    <property type="project" value="UniProtKB-UniRule"/>
</dbReference>
<dbReference type="GO" id="GO:0004615">
    <property type="term" value="F:phosphomannomutase activity"/>
    <property type="evidence" value="ECO:0007669"/>
    <property type="project" value="TreeGrafter"/>
</dbReference>
<dbReference type="GO" id="GO:0005975">
    <property type="term" value="P:carbohydrate metabolic process"/>
    <property type="evidence" value="ECO:0007669"/>
    <property type="project" value="InterPro"/>
</dbReference>
<dbReference type="GO" id="GO:0009252">
    <property type="term" value="P:peptidoglycan biosynthetic process"/>
    <property type="evidence" value="ECO:0007669"/>
    <property type="project" value="TreeGrafter"/>
</dbReference>
<dbReference type="GO" id="GO:0006048">
    <property type="term" value="P:UDP-N-acetylglucosamine biosynthetic process"/>
    <property type="evidence" value="ECO:0007669"/>
    <property type="project" value="TreeGrafter"/>
</dbReference>
<dbReference type="CDD" id="cd05802">
    <property type="entry name" value="GlmM"/>
    <property type="match status" value="1"/>
</dbReference>
<dbReference type="FunFam" id="3.30.310.50:FF:000001">
    <property type="entry name" value="Phosphoglucosamine mutase"/>
    <property type="match status" value="1"/>
</dbReference>
<dbReference type="FunFam" id="3.40.120.10:FF:000001">
    <property type="entry name" value="Phosphoglucosamine mutase"/>
    <property type="match status" value="1"/>
</dbReference>
<dbReference type="FunFam" id="3.40.120.10:FF:000002">
    <property type="entry name" value="Phosphoglucosamine mutase"/>
    <property type="match status" value="1"/>
</dbReference>
<dbReference type="Gene3D" id="3.40.120.10">
    <property type="entry name" value="Alpha-D-Glucose-1,6-Bisphosphate, subunit A, domain 3"/>
    <property type="match status" value="3"/>
</dbReference>
<dbReference type="Gene3D" id="3.30.310.50">
    <property type="entry name" value="Alpha-D-phosphohexomutase, C-terminal domain"/>
    <property type="match status" value="1"/>
</dbReference>
<dbReference type="HAMAP" id="MF_01554_B">
    <property type="entry name" value="GlmM_B"/>
    <property type="match status" value="1"/>
</dbReference>
<dbReference type="InterPro" id="IPR005844">
    <property type="entry name" value="A-D-PHexomutase_a/b/a-I"/>
</dbReference>
<dbReference type="InterPro" id="IPR016055">
    <property type="entry name" value="A-D-PHexomutase_a/b/a-I/II/III"/>
</dbReference>
<dbReference type="InterPro" id="IPR005845">
    <property type="entry name" value="A-D-PHexomutase_a/b/a-II"/>
</dbReference>
<dbReference type="InterPro" id="IPR005846">
    <property type="entry name" value="A-D-PHexomutase_a/b/a-III"/>
</dbReference>
<dbReference type="InterPro" id="IPR005843">
    <property type="entry name" value="A-D-PHexomutase_C"/>
</dbReference>
<dbReference type="InterPro" id="IPR036900">
    <property type="entry name" value="A-D-PHexomutase_C_sf"/>
</dbReference>
<dbReference type="InterPro" id="IPR016066">
    <property type="entry name" value="A-D-PHexomutase_CS"/>
</dbReference>
<dbReference type="InterPro" id="IPR005841">
    <property type="entry name" value="Alpha-D-phosphohexomutase_SF"/>
</dbReference>
<dbReference type="InterPro" id="IPR006352">
    <property type="entry name" value="GlmM_bact"/>
</dbReference>
<dbReference type="InterPro" id="IPR050060">
    <property type="entry name" value="Phosphoglucosamine_mutase"/>
</dbReference>
<dbReference type="NCBIfam" id="TIGR01455">
    <property type="entry name" value="glmM"/>
    <property type="match status" value="1"/>
</dbReference>
<dbReference type="NCBIfam" id="NF008139">
    <property type="entry name" value="PRK10887.1"/>
    <property type="match status" value="1"/>
</dbReference>
<dbReference type="PANTHER" id="PTHR42946:SF1">
    <property type="entry name" value="PHOSPHOGLUCOMUTASE (ALPHA-D-GLUCOSE-1,6-BISPHOSPHATE-DEPENDENT)"/>
    <property type="match status" value="1"/>
</dbReference>
<dbReference type="PANTHER" id="PTHR42946">
    <property type="entry name" value="PHOSPHOHEXOSE MUTASE"/>
    <property type="match status" value="1"/>
</dbReference>
<dbReference type="Pfam" id="PF02878">
    <property type="entry name" value="PGM_PMM_I"/>
    <property type="match status" value="1"/>
</dbReference>
<dbReference type="Pfam" id="PF02879">
    <property type="entry name" value="PGM_PMM_II"/>
    <property type="match status" value="1"/>
</dbReference>
<dbReference type="Pfam" id="PF02880">
    <property type="entry name" value="PGM_PMM_III"/>
    <property type="match status" value="1"/>
</dbReference>
<dbReference type="Pfam" id="PF00408">
    <property type="entry name" value="PGM_PMM_IV"/>
    <property type="match status" value="1"/>
</dbReference>
<dbReference type="PRINTS" id="PR00509">
    <property type="entry name" value="PGMPMM"/>
</dbReference>
<dbReference type="SUPFAM" id="SSF55957">
    <property type="entry name" value="Phosphoglucomutase, C-terminal domain"/>
    <property type="match status" value="1"/>
</dbReference>
<dbReference type="SUPFAM" id="SSF53738">
    <property type="entry name" value="Phosphoglucomutase, first 3 domains"/>
    <property type="match status" value="3"/>
</dbReference>
<dbReference type="PROSITE" id="PS00710">
    <property type="entry name" value="PGM_PMM"/>
    <property type="match status" value="1"/>
</dbReference>
<evidence type="ECO:0000255" key="1">
    <source>
        <dbReference type="HAMAP-Rule" id="MF_01554"/>
    </source>
</evidence>
<sequence>MSNRKYFGTDGIRGRVGDAPITPDFVLKLGWAAGKVLARHGSRKIIIGKDTRISGYMLESALEAGLAAAGLSALFTGPMPTPAVAYLTRTFRAEAGIVISASHNPFYDNGIKFFSIDGTKLPDAVEEAIEAEMEKEISCVDSAELGKASRIVDAAGRYIEFCKATFPNELSLSELKIVVDCANGATYHIAPNVLRELGANVIAIGCEPNGVNINAEVGATDVRALQARVLAEKADLGIAFDGDGDRVIMVDHEGNKVDGDQIMYIIAREGLRQGQLRGGAVGTLMSNMGLELALKQLGIPFARAKVGDRYVLEKMQEKGWRIGAENSGHVILLDKTTTGDGIVAGLQVLAAMARNHMSLHDLCSGMKMFPQILVNVRYTAGSGDPLEHESVKAVTAEVEAALGSRGRVLLRKSGTEPLIRVMVEGEDEAQVTEFAHRIADAVKAV</sequence>
<keyword id="KW-0413">Isomerase</keyword>
<keyword id="KW-0460">Magnesium</keyword>
<keyword id="KW-0479">Metal-binding</keyword>
<keyword id="KW-0597">Phosphoprotein</keyword>
<keyword id="KW-1185">Reference proteome</keyword>
<organism>
    <name type="scientific">Shigella sonnei (strain Ss046)</name>
    <dbReference type="NCBI Taxonomy" id="300269"/>
    <lineage>
        <taxon>Bacteria</taxon>
        <taxon>Pseudomonadati</taxon>
        <taxon>Pseudomonadota</taxon>
        <taxon>Gammaproteobacteria</taxon>
        <taxon>Enterobacterales</taxon>
        <taxon>Enterobacteriaceae</taxon>
        <taxon>Shigella</taxon>
    </lineage>
</organism>
<proteinExistence type="inferred from homology"/>
<protein>
    <recommendedName>
        <fullName evidence="1">Phosphoglucosamine mutase</fullName>
        <ecNumber evidence="1">5.4.2.10</ecNumber>
    </recommendedName>
</protein>
<comment type="function">
    <text evidence="1">Catalyzes the conversion of glucosamine-6-phosphate to glucosamine-1-phosphate.</text>
</comment>
<comment type="catalytic activity">
    <reaction evidence="1">
        <text>alpha-D-glucosamine 1-phosphate = D-glucosamine 6-phosphate</text>
        <dbReference type="Rhea" id="RHEA:23424"/>
        <dbReference type="ChEBI" id="CHEBI:58516"/>
        <dbReference type="ChEBI" id="CHEBI:58725"/>
        <dbReference type="EC" id="5.4.2.10"/>
    </reaction>
</comment>
<comment type="cofactor">
    <cofactor evidence="1">
        <name>Mg(2+)</name>
        <dbReference type="ChEBI" id="CHEBI:18420"/>
    </cofactor>
    <text evidence="1">Binds 1 Mg(2+) ion per subunit.</text>
</comment>
<comment type="PTM">
    <text evidence="1">Activated by phosphorylation.</text>
</comment>
<comment type="similarity">
    <text evidence="1">Belongs to the phosphohexose mutase family.</text>
</comment>
<feature type="chain" id="PRO_0000147956" description="Phosphoglucosamine mutase">
    <location>
        <begin position="1"/>
        <end position="445"/>
    </location>
</feature>
<feature type="active site" description="Phosphoserine intermediate" evidence="1">
    <location>
        <position position="102"/>
    </location>
</feature>
<feature type="binding site" description="via phosphate group" evidence="1">
    <location>
        <position position="102"/>
    </location>
    <ligand>
        <name>Mg(2+)</name>
        <dbReference type="ChEBI" id="CHEBI:18420"/>
    </ligand>
</feature>
<feature type="binding site" evidence="1">
    <location>
        <position position="241"/>
    </location>
    <ligand>
        <name>Mg(2+)</name>
        <dbReference type="ChEBI" id="CHEBI:18420"/>
    </ligand>
</feature>
<feature type="binding site" evidence="1">
    <location>
        <position position="243"/>
    </location>
    <ligand>
        <name>Mg(2+)</name>
        <dbReference type="ChEBI" id="CHEBI:18420"/>
    </ligand>
</feature>
<feature type="binding site" evidence="1">
    <location>
        <position position="245"/>
    </location>
    <ligand>
        <name>Mg(2+)</name>
        <dbReference type="ChEBI" id="CHEBI:18420"/>
    </ligand>
</feature>
<feature type="modified residue" description="Phosphoserine" evidence="1">
    <location>
        <position position="102"/>
    </location>
</feature>